<gene>
    <name evidence="1" type="primary">astE</name>
    <name type="ordered locus">PSPTO_1838</name>
</gene>
<keyword id="KW-0056">Arginine metabolism</keyword>
<keyword id="KW-0378">Hydrolase</keyword>
<keyword id="KW-0479">Metal-binding</keyword>
<keyword id="KW-1185">Reference proteome</keyword>
<keyword id="KW-0862">Zinc</keyword>
<comment type="function">
    <text evidence="1">Transforms N(2)-succinylglutamate into succinate and glutamate.</text>
</comment>
<comment type="catalytic activity">
    <reaction evidence="1">
        <text>N-succinyl-L-glutamate + H2O = L-glutamate + succinate</text>
        <dbReference type="Rhea" id="RHEA:15169"/>
        <dbReference type="ChEBI" id="CHEBI:15377"/>
        <dbReference type="ChEBI" id="CHEBI:29985"/>
        <dbReference type="ChEBI" id="CHEBI:30031"/>
        <dbReference type="ChEBI" id="CHEBI:58763"/>
        <dbReference type="EC" id="3.5.1.96"/>
    </reaction>
</comment>
<comment type="cofactor">
    <cofactor evidence="1">
        <name>Zn(2+)</name>
        <dbReference type="ChEBI" id="CHEBI:29105"/>
    </cofactor>
    <text evidence="1">Binds 1 zinc ion per subunit.</text>
</comment>
<comment type="pathway">
    <text evidence="1">Amino-acid degradation; L-arginine degradation via AST pathway; L-glutamate and succinate from L-arginine: step 5/5.</text>
</comment>
<comment type="similarity">
    <text evidence="1">Belongs to the AspA/AstE family. Succinylglutamate desuccinylase subfamily.</text>
</comment>
<name>ASTE_PSESM</name>
<proteinExistence type="inferred from homology"/>
<organism>
    <name type="scientific">Pseudomonas syringae pv. tomato (strain ATCC BAA-871 / DC3000)</name>
    <dbReference type="NCBI Taxonomy" id="223283"/>
    <lineage>
        <taxon>Bacteria</taxon>
        <taxon>Pseudomonadati</taxon>
        <taxon>Pseudomonadota</taxon>
        <taxon>Gammaproteobacteria</taxon>
        <taxon>Pseudomonadales</taxon>
        <taxon>Pseudomonadaceae</taxon>
        <taxon>Pseudomonas</taxon>
    </lineage>
</organism>
<evidence type="ECO:0000255" key="1">
    <source>
        <dbReference type="HAMAP-Rule" id="MF_00767"/>
    </source>
</evidence>
<reference key="1">
    <citation type="journal article" date="2003" name="Proc. Natl. Acad. Sci. U.S.A.">
        <title>The complete genome sequence of the Arabidopsis and tomato pathogen Pseudomonas syringae pv. tomato DC3000.</title>
        <authorList>
            <person name="Buell C.R."/>
            <person name="Joardar V."/>
            <person name="Lindeberg M."/>
            <person name="Selengut J."/>
            <person name="Paulsen I.T."/>
            <person name="Gwinn M.L."/>
            <person name="Dodson R.J."/>
            <person name="DeBoy R.T."/>
            <person name="Durkin A.S."/>
            <person name="Kolonay J.F."/>
            <person name="Madupu R."/>
            <person name="Daugherty S.C."/>
            <person name="Brinkac L.M."/>
            <person name="Beanan M.J."/>
            <person name="Haft D.H."/>
            <person name="Nelson W.C."/>
            <person name="Davidsen T.M."/>
            <person name="Zafar N."/>
            <person name="Zhou L."/>
            <person name="Liu J."/>
            <person name="Yuan Q."/>
            <person name="Khouri H.M."/>
            <person name="Fedorova N.B."/>
            <person name="Tran B."/>
            <person name="Russell D."/>
            <person name="Berry K.J."/>
            <person name="Utterback T.R."/>
            <person name="Van Aken S.E."/>
            <person name="Feldblyum T.V."/>
            <person name="D'Ascenzo M."/>
            <person name="Deng W.-L."/>
            <person name="Ramos A.R."/>
            <person name="Alfano J.R."/>
            <person name="Cartinhour S."/>
            <person name="Chatterjee A.K."/>
            <person name="Delaney T.P."/>
            <person name="Lazarowitz S.G."/>
            <person name="Martin G.B."/>
            <person name="Schneider D.J."/>
            <person name="Tang X."/>
            <person name="Bender C.L."/>
            <person name="White O."/>
            <person name="Fraser C.M."/>
            <person name="Collmer A."/>
        </authorList>
    </citation>
    <scope>NUCLEOTIDE SEQUENCE [LARGE SCALE GENOMIC DNA]</scope>
    <source>
        <strain>ATCC BAA-871 / DC3000</strain>
    </source>
</reference>
<feature type="chain" id="PRO_0000174645" description="Succinylglutamate desuccinylase">
    <location>
        <begin position="1"/>
        <end position="335"/>
    </location>
</feature>
<feature type="active site" evidence="1">
    <location>
        <position position="215"/>
    </location>
</feature>
<feature type="binding site" evidence="1">
    <location>
        <position position="59"/>
    </location>
    <ligand>
        <name>Zn(2+)</name>
        <dbReference type="ChEBI" id="CHEBI:29105"/>
    </ligand>
</feature>
<feature type="binding site" evidence="1">
    <location>
        <position position="62"/>
    </location>
    <ligand>
        <name>Zn(2+)</name>
        <dbReference type="ChEBI" id="CHEBI:29105"/>
    </ligand>
</feature>
<feature type="binding site" evidence="1">
    <location>
        <position position="151"/>
    </location>
    <ligand>
        <name>Zn(2+)</name>
        <dbReference type="ChEBI" id="CHEBI:29105"/>
    </ligand>
</feature>
<dbReference type="EC" id="3.5.1.96" evidence="1"/>
<dbReference type="EMBL" id="AE016853">
    <property type="protein sequence ID" value="AAO55357.1"/>
    <property type="molecule type" value="Genomic_DNA"/>
</dbReference>
<dbReference type="RefSeq" id="NP_791662.1">
    <property type="nucleotide sequence ID" value="NC_004578.1"/>
</dbReference>
<dbReference type="RefSeq" id="WP_005767756.1">
    <property type="nucleotide sequence ID" value="NC_004578.1"/>
</dbReference>
<dbReference type="SMR" id="Q885J4"/>
<dbReference type="STRING" id="223283.PSPTO_1838"/>
<dbReference type="GeneID" id="1183479"/>
<dbReference type="KEGG" id="pst:PSPTO_1838"/>
<dbReference type="PATRIC" id="fig|223283.9.peg.1868"/>
<dbReference type="eggNOG" id="COG2988">
    <property type="taxonomic scope" value="Bacteria"/>
</dbReference>
<dbReference type="HOGENOM" id="CLU_071608_0_0_6"/>
<dbReference type="OrthoDB" id="5290473at2"/>
<dbReference type="PhylomeDB" id="Q885J4"/>
<dbReference type="UniPathway" id="UPA00185">
    <property type="reaction ID" value="UER00283"/>
</dbReference>
<dbReference type="Proteomes" id="UP000002515">
    <property type="component" value="Chromosome"/>
</dbReference>
<dbReference type="GO" id="GO:0016788">
    <property type="term" value="F:hydrolase activity, acting on ester bonds"/>
    <property type="evidence" value="ECO:0007669"/>
    <property type="project" value="UniProtKB-UniRule"/>
</dbReference>
<dbReference type="GO" id="GO:0009017">
    <property type="term" value="F:succinylglutamate desuccinylase activity"/>
    <property type="evidence" value="ECO:0007669"/>
    <property type="project" value="UniProtKB-EC"/>
</dbReference>
<dbReference type="GO" id="GO:0008270">
    <property type="term" value="F:zinc ion binding"/>
    <property type="evidence" value="ECO:0007669"/>
    <property type="project" value="UniProtKB-UniRule"/>
</dbReference>
<dbReference type="GO" id="GO:0019544">
    <property type="term" value="P:arginine catabolic process to glutamate"/>
    <property type="evidence" value="ECO:0007669"/>
    <property type="project" value="UniProtKB-UniRule"/>
</dbReference>
<dbReference type="GO" id="GO:0019545">
    <property type="term" value="P:arginine catabolic process to succinate"/>
    <property type="evidence" value="ECO:0007669"/>
    <property type="project" value="UniProtKB-UniRule"/>
</dbReference>
<dbReference type="CDD" id="cd03855">
    <property type="entry name" value="M14_ASTE"/>
    <property type="match status" value="1"/>
</dbReference>
<dbReference type="Gene3D" id="3.40.630.10">
    <property type="entry name" value="Zn peptidases"/>
    <property type="match status" value="1"/>
</dbReference>
<dbReference type="HAMAP" id="MF_00767">
    <property type="entry name" value="Arg_catab_AstE"/>
    <property type="match status" value="1"/>
</dbReference>
<dbReference type="InterPro" id="IPR050178">
    <property type="entry name" value="AspA/AstE_fam"/>
</dbReference>
<dbReference type="InterPro" id="IPR055438">
    <property type="entry name" value="AstE_AspA_cat"/>
</dbReference>
<dbReference type="InterPro" id="IPR007036">
    <property type="entry name" value="Aste_AspA_hybrid_dom"/>
</dbReference>
<dbReference type="InterPro" id="IPR016681">
    <property type="entry name" value="SuccinylGlu_desuccinylase"/>
</dbReference>
<dbReference type="NCBIfam" id="TIGR03242">
    <property type="entry name" value="arg_catab_astE"/>
    <property type="match status" value="1"/>
</dbReference>
<dbReference type="NCBIfam" id="NF003706">
    <property type="entry name" value="PRK05324.1"/>
    <property type="match status" value="1"/>
</dbReference>
<dbReference type="PANTHER" id="PTHR15162">
    <property type="entry name" value="ASPARTOACYLASE"/>
    <property type="match status" value="1"/>
</dbReference>
<dbReference type="PANTHER" id="PTHR15162:SF7">
    <property type="entry name" value="SUCCINYLGLUTAMATE DESUCCINYLASE"/>
    <property type="match status" value="1"/>
</dbReference>
<dbReference type="Pfam" id="PF24827">
    <property type="entry name" value="AstE_AspA_cat"/>
    <property type="match status" value="1"/>
</dbReference>
<dbReference type="Pfam" id="PF04952">
    <property type="entry name" value="AstE_AspA_hybrid"/>
    <property type="match status" value="1"/>
</dbReference>
<dbReference type="PIRSF" id="PIRSF017020">
    <property type="entry name" value="AstE"/>
    <property type="match status" value="1"/>
</dbReference>
<dbReference type="SUPFAM" id="SSF53187">
    <property type="entry name" value="Zn-dependent exopeptidases"/>
    <property type="match status" value="1"/>
</dbReference>
<sequence length="335" mass="37375">MLALGKLLELTLAGREPAEKTQLTVEGVRMRWLAEGALEVRPPQARDNGTDLLLSAGIHGNETAPIELLDELIRSIARGDLKPRARILFLFGNPAAMRLGARYVEQDVNRLFNGRHEQSGGAEALRACELERLAASFFSLPDRYRLHYDLHTAIRGSKIEQFALYPWKEGRQHSRFELARLRAAGISAVLLQNKPSIVFSAYTYEQLGAEAFTLELGKARPFGQNRHVNLAPLRLRLEQIIEGSEPQPDERLEGLQLFSVAREVIKRSDAFTFNLADDVENFSELEKGYVLAEDVSDSRWVVKEEGARIIFPNPKVKNGLRAGIVIVPADADGLG</sequence>
<accession>Q885J4</accession>
<protein>
    <recommendedName>
        <fullName evidence="1">Succinylglutamate desuccinylase</fullName>
        <ecNumber evidence="1">3.5.1.96</ecNumber>
    </recommendedName>
</protein>